<comment type="function">
    <text evidence="1">Escorts unspliced or incompletely spliced viral pre-mRNAs (late transcripts) out of the nucleus of infected cells. These pre-mRNAs carry a recognition sequence called Rev responsive element (RRE) located in the env gene, that is not present in fully spliced viral mRNAs (early transcripts). This function is essential since most viral proteins are translated from unspliced or partially spliced pre-mRNAs which cannot exit the nucleus by the pathway used by fully processed cellular mRNAs. Rev itself is translated from a fully spliced mRNA that readily exits the nucleus. Rev's nuclear localization signal (NLS) binds directly to KPNB1/Importin beta-1 without previous binding to KPNA1/Importin alpha-1. KPNB1 binds to the GDP bound form of RAN (Ran-GDP) and targets Rev to the nucleus. In the nucleus, the conversion from Ran-GDP to Ran-GTP dissociates Rev from KPNB1 and allows Rev's binding to the RRE in viral pre-mRNAs. Rev multimerization on the RRE via cooperative assembly exposes its nuclear export signal (NES) to the surface. Rev can then form a complex with XPO1/CRM1 and Ran-GTP, leading to nuclear export of the complex. Conversion from Ran-GTP to Ran-GDP mediates dissociation of the Rev/RRE/XPO1/RAN complex, so that Rev can return to the nucleus for a subsequent round of export. Beside KPNB1, also seems to interact with TNPO1/Transportin-1, RANBP5/IPO5 and IPO7/RANBP7 for nuclear import. The nucleoporin-like HRB/RIP is an essential cofactor that probably indirectly interacts with Rev to release HIV RNAs from the perinuclear region to the cytoplasm.</text>
</comment>
<comment type="subunit">
    <text evidence="1">Homomultimer; when bound to the RRE. Multimeric assembly is essential for activity and may involve XPO1. Binds to human KPNB1, XPO1, TNPO1, RANBP5 and IPO7. Interacts with the viral Integrase. Interacts with human KHDRBS1. Interacts with human NAP1; this interaction decreases Rev multimerization and stimulates its activity. Interacts with human DEAD-box helicases DDX3 and DDX24; these interactions may serve for viral RNA export to the cytoplasm and packaging, respectively. Interacts with human PSIP1; this interaction may inhibit HIV-1 DNA integration by promoting dissociation of the Integrase-LEDGF/p75 complex.</text>
</comment>
<comment type="subcellular location">
    <subcellularLocation>
        <location evidence="1">Host nucleus</location>
        <location evidence="1">Host nucleolus</location>
    </subcellularLocation>
    <subcellularLocation>
        <location evidence="1">Host cytoplasm</location>
    </subcellularLocation>
    <text evidence="1">The presence of both nuclear import and nuclear export signals leads to continuous shuttling between the nucleus and cytoplasm.</text>
</comment>
<comment type="domain">
    <text evidence="1">The RNA-binding motif binds to the RRE, a 240 bp stem-and-loop structure present in incompletely spliced viral pre-mRNAs. This region also contains the NLS which mediates nuclear localization via KPNB1 binding and, when the N-terminal sequence is present, nucleolar targeting. These overlapping functions prevent Rev bound to RRE from undesirable return to the nucleus. When Rev binds the RRE, the NLS becomes masked while the NES remains accessible. The leucine-rich NES mediates binding to human XPO1.</text>
</comment>
<comment type="PTM">
    <text evidence="1">Asymmetrically arginine dimethylated at one site by host PRMT6. Methylation impairs the RNA-binding activity and export of viral RNA from the nucleus to the cytoplasm.</text>
</comment>
<comment type="PTM">
    <text evidence="1">Phosphorylated by protein kinase CK2. Presence of, and maybe binding to the N-terminus of the regulatory beta subunit of CK2 is necessary for CK2-mediated Rev's phosphorylation.</text>
</comment>
<comment type="miscellaneous">
    <text evidence="1">HIV-1 lineages are divided in three main groups, M (for Major), O (for Outlier), and N (for New, or Non-M, Non-O). The vast majority of strains found worldwide belong to the group M. Group O seems to be endemic to and largely confined to Cameroon and neighboring countries in West Central Africa, where these viruses represent a small minority of HIV-1 strains. The group N is represented by a limited number of isolates from Cameroonian persons. The group M is further subdivided in 9 clades or subtypes (A to D, F to H, J and K).</text>
</comment>
<comment type="similarity">
    <text evidence="1">Belongs to the HIV-1 REV protein family.</text>
</comment>
<organismHost>
    <name type="scientific">Homo sapiens</name>
    <name type="common">Human</name>
    <dbReference type="NCBI Taxonomy" id="9606"/>
</organismHost>
<organism>
    <name type="scientific">Human immunodeficiency virus type 1 group M subtype D (isolate Z6)</name>
    <name type="common">HIV-1</name>
    <dbReference type="NCBI Taxonomy" id="11708"/>
    <lineage>
        <taxon>Viruses</taxon>
        <taxon>Riboviria</taxon>
        <taxon>Pararnavirae</taxon>
        <taxon>Artverviricota</taxon>
        <taxon>Revtraviricetes</taxon>
        <taxon>Ortervirales</taxon>
        <taxon>Retroviridae</taxon>
        <taxon>Orthoretrovirinae</taxon>
        <taxon>Lentivirus</taxon>
        <taxon>Human immunodeficiency virus type 1</taxon>
    </lineage>
</organism>
<accession>P04619</accession>
<proteinExistence type="evidence at protein level"/>
<name>REV_HV1Z6</name>
<feature type="chain" id="PRO_0000085280" description="Protein Rev">
    <location>
        <begin position="1"/>
        <end position="116"/>
    </location>
</feature>
<feature type="region of interest" description="Homomultimerization" evidence="1">
    <location>
        <begin position="18"/>
        <end position="26"/>
    </location>
</feature>
<feature type="region of interest" description="Disordered" evidence="2">
    <location>
        <begin position="23"/>
        <end position="49"/>
    </location>
</feature>
<feature type="region of interest" description="Disordered" evidence="2">
    <location>
        <begin position="86"/>
        <end position="116"/>
    </location>
</feature>
<feature type="short sequence motif" description="Nuclear localization signal and RNA-binding (RRE)" evidence="1">
    <location>
        <begin position="34"/>
        <end position="50"/>
    </location>
</feature>
<feature type="short sequence motif" description="Nuclear export signal and binding to XPO1" evidence="1">
    <location>
        <begin position="73"/>
        <end position="84"/>
    </location>
</feature>
<feature type="compositionally biased region" description="Basic residues" evidence="2">
    <location>
        <begin position="36"/>
        <end position="49"/>
    </location>
</feature>
<feature type="modified residue" description="Phosphoserine; by host CK2" evidence="1">
    <location>
        <position position="5"/>
    </location>
</feature>
<feature type="modified residue" description="Phosphoserine; by host" evidence="1">
    <location>
        <position position="92"/>
    </location>
</feature>
<feature type="modified residue" description="Phosphoserine; by host" evidence="1">
    <location>
        <position position="99"/>
    </location>
</feature>
<sequence length="116" mass="13005">MAGRSGDRDEDLLKAVRLIKILYQSNPPPSPEGTRQARRNRRRRWRARQRQIHSIGERILSTYLGRSEEPVPLQLPPLERLNLNCSEDCGTSGTQGVGSPQISVESPTVLESGTEE</sequence>
<gene>
    <name evidence="1" type="primary">rev</name>
</gene>
<protein>
    <recommendedName>
        <fullName evidence="1">Protein Rev</fullName>
    </recommendedName>
    <alternativeName>
        <fullName evidence="1">ART/TRS</fullName>
    </alternativeName>
    <alternativeName>
        <fullName evidence="1">Anti-repression transactivator</fullName>
    </alternativeName>
    <alternativeName>
        <fullName evidence="1">Regulator of expression of viral proteins</fullName>
    </alternativeName>
</protein>
<keyword id="KW-0002">3D-structure</keyword>
<keyword id="KW-0014">AIDS</keyword>
<keyword id="KW-1035">Host cytoplasm</keyword>
<keyword id="KW-1048">Host nucleus</keyword>
<keyword id="KW-0945">Host-virus interaction</keyword>
<keyword id="KW-0488">Methylation</keyword>
<keyword id="KW-0509">mRNA transport</keyword>
<keyword id="KW-0597">Phosphoprotein</keyword>
<keyword id="KW-0694">RNA-binding</keyword>
<keyword id="KW-0813">Transport</keyword>
<evidence type="ECO:0000255" key="1">
    <source>
        <dbReference type="HAMAP-Rule" id="MF_04077"/>
    </source>
</evidence>
<evidence type="ECO:0000256" key="2">
    <source>
        <dbReference type="SAM" id="MobiDB-lite"/>
    </source>
</evidence>
<dbReference type="EMBL" id="K03458">
    <property type="protein sequence ID" value="AAA45378.1"/>
    <property type="molecule type" value="Genomic_RNA"/>
</dbReference>
<dbReference type="PDB" id="1RPV">
    <property type="method" value="NMR"/>
    <property type="chains" value="A=34-50"/>
</dbReference>
<dbReference type="PDBsum" id="1RPV"/>
<dbReference type="GO" id="GO:0030430">
    <property type="term" value="C:host cell cytoplasm"/>
    <property type="evidence" value="ECO:0007669"/>
    <property type="project" value="UniProtKB-SubCell"/>
</dbReference>
<dbReference type="GO" id="GO:0044196">
    <property type="term" value="C:host cell nucleolus"/>
    <property type="evidence" value="ECO:0007669"/>
    <property type="project" value="UniProtKB-SubCell"/>
</dbReference>
<dbReference type="GO" id="GO:0003700">
    <property type="term" value="F:DNA-binding transcription factor activity"/>
    <property type="evidence" value="ECO:0007669"/>
    <property type="project" value="UniProtKB-UniRule"/>
</dbReference>
<dbReference type="GO" id="GO:0003723">
    <property type="term" value="F:RNA binding"/>
    <property type="evidence" value="ECO:0007669"/>
    <property type="project" value="UniProtKB-UniRule"/>
</dbReference>
<dbReference type="GO" id="GO:0051028">
    <property type="term" value="P:mRNA transport"/>
    <property type="evidence" value="ECO:0007669"/>
    <property type="project" value="UniProtKB-UniRule"/>
</dbReference>
<dbReference type="GO" id="GO:0016032">
    <property type="term" value="P:viral process"/>
    <property type="evidence" value="ECO:0007669"/>
    <property type="project" value="UniProtKB-UniRule"/>
</dbReference>
<dbReference type="Gene3D" id="6.10.140.630">
    <property type="match status" value="1"/>
</dbReference>
<dbReference type="HAMAP" id="MF_04077">
    <property type="entry name" value="REV_HIV1"/>
    <property type="match status" value="1"/>
</dbReference>
<dbReference type="InterPro" id="IPR000625">
    <property type="entry name" value="REV_protein"/>
</dbReference>
<dbReference type="Pfam" id="PF00424">
    <property type="entry name" value="REV"/>
    <property type="match status" value="1"/>
</dbReference>
<reference key="1">
    <citation type="journal article" date="1987" name="Gene">
        <title>Molecular characterization of human immunodeficiency virus from Zaire: nucleotide sequence analysis identifies conserved and variable domains in the envelope gene.</title>
        <authorList>
            <person name="Srinivasan A."/>
            <person name="Anand R."/>
            <person name="York D."/>
            <person name="Ranganathan P."/>
            <person name="Feorino P."/>
            <person name="Schochetman G."/>
            <person name="Curran J."/>
            <person name="Kalyanaraman V.S."/>
            <person name="Luciw P.A."/>
            <person name="Sanchez-Pescador R."/>
        </authorList>
    </citation>
    <scope>NUCLEOTIDE SEQUENCE [GENOMIC RNA]</scope>
</reference>
<reference key="2">
    <citation type="journal article" date="1999" name="Arch. Biochem. Biophys.">
        <title>The ins and outs of HIV Rev.</title>
        <authorList>
            <person name="Hope T.J."/>
        </authorList>
    </citation>
    <scope>REVIEW</scope>
</reference>
<reference key="3">
    <citation type="journal article" date="1995" name="Biochemistry">
        <title>NMR solution structure of the RNA-binding peptide from human immunodeficiency virus (type 1) Rev.</title>
        <authorList>
            <person name="Scanlon M.J."/>
            <person name="Fairlie D.P."/>
            <person name="Craik D.J."/>
            <person name="Englebretsen D.R."/>
            <person name="West M.L."/>
        </authorList>
    </citation>
    <scope>STRUCTURE BY NMR OF 34-50</scope>
</reference>